<sequence length="273" mass="29691">MLTKRIIPCLDVTLDRAGGCVVKGVEFVDLKEAGDPVELAKRYNEDGADELVFLDITASAHGRETMIDVIERTADEVFIPLTVGGGISSIEAIRQILRAGADKVSVNTSAVKNPEFIKESSDIFGAQCIVTAIDCKRNTNVKDNPDKTILELEDGTPAWYEVVIYGGRKNTGIDAVQWAKRAEELGSGEILLTSMDRDGTCAGYDIPITRKLSEELDIPIIASGGVGNPQHIYEGFSDGKADAALAASIFHFGEYSIQEVKEFLKERKIPVRL</sequence>
<keyword id="KW-0028">Amino-acid biosynthesis</keyword>
<keyword id="KW-0963">Cytoplasm</keyword>
<keyword id="KW-0368">Histidine biosynthesis</keyword>
<keyword id="KW-0456">Lyase</keyword>
<feature type="chain" id="PRO_0000142282" description="Imidazole glycerol phosphate synthase subunit HisF">
    <location>
        <begin position="1"/>
        <end position="273"/>
    </location>
</feature>
<feature type="active site" evidence="1">
    <location>
        <position position="11"/>
    </location>
</feature>
<feature type="active site" evidence="1">
    <location>
        <position position="134"/>
    </location>
</feature>
<gene>
    <name evidence="1" type="primary">hisF</name>
    <name type="ordered locus">MM_1704</name>
</gene>
<proteinExistence type="inferred from homology"/>
<organism>
    <name type="scientific">Methanosarcina mazei (strain ATCC BAA-159 / DSM 3647 / Goe1 / Go1 / JCM 11833 / OCM 88)</name>
    <name type="common">Methanosarcina frisia</name>
    <dbReference type="NCBI Taxonomy" id="192952"/>
    <lineage>
        <taxon>Archaea</taxon>
        <taxon>Methanobacteriati</taxon>
        <taxon>Methanobacteriota</taxon>
        <taxon>Stenosarchaea group</taxon>
        <taxon>Methanomicrobia</taxon>
        <taxon>Methanosarcinales</taxon>
        <taxon>Methanosarcinaceae</taxon>
        <taxon>Methanosarcina</taxon>
    </lineage>
</organism>
<reference key="1">
    <citation type="journal article" date="2002" name="J. Mol. Microbiol. Biotechnol.">
        <title>The genome of Methanosarcina mazei: evidence for lateral gene transfer between Bacteria and Archaea.</title>
        <authorList>
            <person name="Deppenmeier U."/>
            <person name="Johann A."/>
            <person name="Hartsch T."/>
            <person name="Merkl R."/>
            <person name="Schmitz R.A."/>
            <person name="Martinez-Arias R."/>
            <person name="Henne A."/>
            <person name="Wiezer A."/>
            <person name="Baeumer S."/>
            <person name="Jacobi C."/>
            <person name="Brueggemann H."/>
            <person name="Lienard T."/>
            <person name="Christmann A."/>
            <person name="Boemecke M."/>
            <person name="Steckel S."/>
            <person name="Bhattacharyya A."/>
            <person name="Lykidis A."/>
            <person name="Overbeek R."/>
            <person name="Klenk H.-P."/>
            <person name="Gunsalus R.P."/>
            <person name="Fritz H.-J."/>
            <person name="Gottschalk G."/>
        </authorList>
    </citation>
    <scope>NUCLEOTIDE SEQUENCE [LARGE SCALE GENOMIC DNA]</scope>
    <source>
        <strain>ATCC BAA-159 / DSM 3647 / Goe1 / Go1 / JCM 11833 / OCM 88</strain>
    </source>
</reference>
<name>HIS6_METMA</name>
<accession>Q8PW92</accession>
<evidence type="ECO:0000255" key="1">
    <source>
        <dbReference type="HAMAP-Rule" id="MF_01013"/>
    </source>
</evidence>
<protein>
    <recommendedName>
        <fullName evidence="1">Imidazole glycerol phosphate synthase subunit HisF</fullName>
        <ecNumber evidence="1">4.3.2.10</ecNumber>
    </recommendedName>
    <alternativeName>
        <fullName evidence="1">IGP synthase cyclase subunit</fullName>
    </alternativeName>
    <alternativeName>
        <fullName evidence="1">IGP synthase subunit HisF</fullName>
    </alternativeName>
    <alternativeName>
        <fullName evidence="1">ImGP synthase subunit HisF</fullName>
        <shortName evidence="1">IGPS subunit HisF</shortName>
    </alternativeName>
</protein>
<comment type="function">
    <text evidence="1">IGPS catalyzes the conversion of PRFAR and glutamine to IGP, AICAR and glutamate. The HisF subunit catalyzes the cyclization activity that produces IGP and AICAR from PRFAR using the ammonia provided by the HisH subunit.</text>
</comment>
<comment type="catalytic activity">
    <reaction evidence="1">
        <text>5-[(5-phospho-1-deoxy-D-ribulos-1-ylimino)methylamino]-1-(5-phospho-beta-D-ribosyl)imidazole-4-carboxamide + L-glutamine = D-erythro-1-(imidazol-4-yl)glycerol 3-phosphate + 5-amino-1-(5-phospho-beta-D-ribosyl)imidazole-4-carboxamide + L-glutamate + H(+)</text>
        <dbReference type="Rhea" id="RHEA:24793"/>
        <dbReference type="ChEBI" id="CHEBI:15378"/>
        <dbReference type="ChEBI" id="CHEBI:29985"/>
        <dbReference type="ChEBI" id="CHEBI:58278"/>
        <dbReference type="ChEBI" id="CHEBI:58359"/>
        <dbReference type="ChEBI" id="CHEBI:58475"/>
        <dbReference type="ChEBI" id="CHEBI:58525"/>
        <dbReference type="EC" id="4.3.2.10"/>
    </reaction>
</comment>
<comment type="pathway">
    <text evidence="1">Amino-acid biosynthesis; L-histidine biosynthesis; L-histidine from 5-phospho-alpha-D-ribose 1-diphosphate: step 5/9.</text>
</comment>
<comment type="subunit">
    <text evidence="1">Heterodimer of HisH and HisF.</text>
</comment>
<comment type="subcellular location">
    <subcellularLocation>
        <location evidence="1">Cytoplasm</location>
    </subcellularLocation>
</comment>
<comment type="similarity">
    <text evidence="1">Belongs to the HisA/HisF family.</text>
</comment>
<dbReference type="EC" id="4.3.2.10" evidence="1"/>
<dbReference type="EMBL" id="AE008384">
    <property type="protein sequence ID" value="AAM31400.1"/>
    <property type="molecule type" value="Genomic_DNA"/>
</dbReference>
<dbReference type="RefSeq" id="WP_011033646.1">
    <property type="nucleotide sequence ID" value="NC_003901.1"/>
</dbReference>
<dbReference type="SMR" id="Q8PW92"/>
<dbReference type="GeneID" id="82160764"/>
<dbReference type="KEGG" id="mma:MM_1704"/>
<dbReference type="PATRIC" id="fig|192952.21.peg.1978"/>
<dbReference type="eggNOG" id="arCOG00617">
    <property type="taxonomic scope" value="Archaea"/>
</dbReference>
<dbReference type="HOGENOM" id="CLU_048577_4_0_2"/>
<dbReference type="UniPathway" id="UPA00031">
    <property type="reaction ID" value="UER00010"/>
</dbReference>
<dbReference type="Proteomes" id="UP000000595">
    <property type="component" value="Chromosome"/>
</dbReference>
<dbReference type="GO" id="GO:0005737">
    <property type="term" value="C:cytoplasm"/>
    <property type="evidence" value="ECO:0007669"/>
    <property type="project" value="UniProtKB-SubCell"/>
</dbReference>
<dbReference type="GO" id="GO:0000107">
    <property type="term" value="F:imidazoleglycerol-phosphate synthase activity"/>
    <property type="evidence" value="ECO:0007669"/>
    <property type="project" value="UniProtKB-UniRule"/>
</dbReference>
<dbReference type="GO" id="GO:0016829">
    <property type="term" value="F:lyase activity"/>
    <property type="evidence" value="ECO:0007669"/>
    <property type="project" value="UniProtKB-KW"/>
</dbReference>
<dbReference type="GO" id="GO:0000105">
    <property type="term" value="P:L-histidine biosynthetic process"/>
    <property type="evidence" value="ECO:0007669"/>
    <property type="project" value="UniProtKB-UniRule"/>
</dbReference>
<dbReference type="CDD" id="cd04731">
    <property type="entry name" value="HisF"/>
    <property type="match status" value="1"/>
</dbReference>
<dbReference type="FunFam" id="3.20.20.70:FF:000006">
    <property type="entry name" value="Imidazole glycerol phosphate synthase subunit HisF"/>
    <property type="match status" value="1"/>
</dbReference>
<dbReference type="Gene3D" id="3.20.20.70">
    <property type="entry name" value="Aldolase class I"/>
    <property type="match status" value="1"/>
</dbReference>
<dbReference type="HAMAP" id="MF_01013">
    <property type="entry name" value="HisF"/>
    <property type="match status" value="1"/>
</dbReference>
<dbReference type="InterPro" id="IPR013785">
    <property type="entry name" value="Aldolase_TIM"/>
</dbReference>
<dbReference type="InterPro" id="IPR006062">
    <property type="entry name" value="His_biosynth"/>
</dbReference>
<dbReference type="InterPro" id="IPR004651">
    <property type="entry name" value="HisF"/>
</dbReference>
<dbReference type="InterPro" id="IPR050064">
    <property type="entry name" value="IGPS_HisA/HisF"/>
</dbReference>
<dbReference type="InterPro" id="IPR011060">
    <property type="entry name" value="RibuloseP-bd_barrel"/>
</dbReference>
<dbReference type="NCBIfam" id="TIGR00735">
    <property type="entry name" value="hisF"/>
    <property type="match status" value="1"/>
</dbReference>
<dbReference type="PANTHER" id="PTHR21235:SF2">
    <property type="entry name" value="IMIDAZOLE GLYCEROL PHOSPHATE SYNTHASE HISHF"/>
    <property type="match status" value="1"/>
</dbReference>
<dbReference type="PANTHER" id="PTHR21235">
    <property type="entry name" value="IMIDAZOLE GLYCEROL PHOSPHATE SYNTHASE SUBUNIT HISF/H IGP SYNTHASE SUBUNIT HISF/H"/>
    <property type="match status" value="1"/>
</dbReference>
<dbReference type="Pfam" id="PF00977">
    <property type="entry name" value="His_biosynth"/>
    <property type="match status" value="1"/>
</dbReference>
<dbReference type="SUPFAM" id="SSF51366">
    <property type="entry name" value="Ribulose-phoshate binding barrel"/>
    <property type="match status" value="1"/>
</dbReference>